<dbReference type="EC" id="6.1.1.22" evidence="1"/>
<dbReference type="EMBL" id="CP000238">
    <property type="protein sequence ID" value="ABF13990.1"/>
    <property type="molecule type" value="Genomic_DNA"/>
</dbReference>
<dbReference type="RefSeq" id="WP_011520584.1">
    <property type="nucleotide sequence ID" value="NC_007984.1"/>
</dbReference>
<dbReference type="SMR" id="Q1LT63"/>
<dbReference type="STRING" id="374463.BCI_0408"/>
<dbReference type="KEGG" id="bci:BCI_0408"/>
<dbReference type="HOGENOM" id="CLU_004553_2_0_6"/>
<dbReference type="OrthoDB" id="9762036at2"/>
<dbReference type="Proteomes" id="UP000002427">
    <property type="component" value="Chromosome"/>
</dbReference>
<dbReference type="GO" id="GO:0005737">
    <property type="term" value="C:cytoplasm"/>
    <property type="evidence" value="ECO:0007669"/>
    <property type="project" value="UniProtKB-SubCell"/>
</dbReference>
<dbReference type="GO" id="GO:0004816">
    <property type="term" value="F:asparagine-tRNA ligase activity"/>
    <property type="evidence" value="ECO:0007669"/>
    <property type="project" value="UniProtKB-UniRule"/>
</dbReference>
<dbReference type="GO" id="GO:0005524">
    <property type="term" value="F:ATP binding"/>
    <property type="evidence" value="ECO:0007669"/>
    <property type="project" value="UniProtKB-UniRule"/>
</dbReference>
<dbReference type="GO" id="GO:0003676">
    <property type="term" value="F:nucleic acid binding"/>
    <property type="evidence" value="ECO:0007669"/>
    <property type="project" value="InterPro"/>
</dbReference>
<dbReference type="GO" id="GO:0006421">
    <property type="term" value="P:asparaginyl-tRNA aminoacylation"/>
    <property type="evidence" value="ECO:0007669"/>
    <property type="project" value="UniProtKB-UniRule"/>
</dbReference>
<dbReference type="CDD" id="cd00776">
    <property type="entry name" value="AsxRS_core"/>
    <property type="match status" value="1"/>
</dbReference>
<dbReference type="CDD" id="cd04318">
    <property type="entry name" value="EcAsnRS_like_N"/>
    <property type="match status" value="1"/>
</dbReference>
<dbReference type="FunFam" id="3.30.930.10:FF:000016">
    <property type="entry name" value="Asparagine--tRNA ligase"/>
    <property type="match status" value="1"/>
</dbReference>
<dbReference type="Gene3D" id="3.30.930.10">
    <property type="entry name" value="Bira Bifunctional Protein, Domain 2"/>
    <property type="match status" value="1"/>
</dbReference>
<dbReference type="Gene3D" id="2.40.50.140">
    <property type="entry name" value="Nucleic acid-binding proteins"/>
    <property type="match status" value="1"/>
</dbReference>
<dbReference type="HAMAP" id="MF_00534">
    <property type="entry name" value="Asn_tRNA_synth"/>
    <property type="match status" value="1"/>
</dbReference>
<dbReference type="InterPro" id="IPR004364">
    <property type="entry name" value="Aa-tRNA-synt_II"/>
</dbReference>
<dbReference type="InterPro" id="IPR006195">
    <property type="entry name" value="aa-tRNA-synth_II"/>
</dbReference>
<dbReference type="InterPro" id="IPR045864">
    <property type="entry name" value="aa-tRNA-synth_II/BPL/LPL"/>
</dbReference>
<dbReference type="InterPro" id="IPR004522">
    <property type="entry name" value="Asn-tRNA-ligase"/>
</dbReference>
<dbReference type="InterPro" id="IPR002312">
    <property type="entry name" value="Asp/Asn-tRNA-synth_IIb"/>
</dbReference>
<dbReference type="InterPro" id="IPR012340">
    <property type="entry name" value="NA-bd_OB-fold"/>
</dbReference>
<dbReference type="InterPro" id="IPR004365">
    <property type="entry name" value="NA-bd_OB_tRNA"/>
</dbReference>
<dbReference type="NCBIfam" id="TIGR00457">
    <property type="entry name" value="asnS"/>
    <property type="match status" value="1"/>
</dbReference>
<dbReference type="NCBIfam" id="NF003037">
    <property type="entry name" value="PRK03932.1"/>
    <property type="match status" value="1"/>
</dbReference>
<dbReference type="PANTHER" id="PTHR22594:SF34">
    <property type="entry name" value="ASPARAGINE--TRNA LIGASE, MITOCHONDRIAL-RELATED"/>
    <property type="match status" value="1"/>
</dbReference>
<dbReference type="PANTHER" id="PTHR22594">
    <property type="entry name" value="ASPARTYL/LYSYL-TRNA SYNTHETASE"/>
    <property type="match status" value="1"/>
</dbReference>
<dbReference type="Pfam" id="PF00152">
    <property type="entry name" value="tRNA-synt_2"/>
    <property type="match status" value="1"/>
</dbReference>
<dbReference type="Pfam" id="PF01336">
    <property type="entry name" value="tRNA_anti-codon"/>
    <property type="match status" value="1"/>
</dbReference>
<dbReference type="PRINTS" id="PR01042">
    <property type="entry name" value="TRNASYNTHASP"/>
</dbReference>
<dbReference type="SUPFAM" id="SSF55681">
    <property type="entry name" value="Class II aaRS and biotin synthetases"/>
    <property type="match status" value="1"/>
</dbReference>
<dbReference type="SUPFAM" id="SSF50249">
    <property type="entry name" value="Nucleic acid-binding proteins"/>
    <property type="match status" value="1"/>
</dbReference>
<dbReference type="PROSITE" id="PS50862">
    <property type="entry name" value="AA_TRNA_LIGASE_II"/>
    <property type="match status" value="1"/>
</dbReference>
<comment type="catalytic activity">
    <reaction evidence="1">
        <text>tRNA(Asn) + L-asparagine + ATP = L-asparaginyl-tRNA(Asn) + AMP + diphosphate + H(+)</text>
        <dbReference type="Rhea" id="RHEA:11180"/>
        <dbReference type="Rhea" id="RHEA-COMP:9659"/>
        <dbReference type="Rhea" id="RHEA-COMP:9674"/>
        <dbReference type="ChEBI" id="CHEBI:15378"/>
        <dbReference type="ChEBI" id="CHEBI:30616"/>
        <dbReference type="ChEBI" id="CHEBI:33019"/>
        <dbReference type="ChEBI" id="CHEBI:58048"/>
        <dbReference type="ChEBI" id="CHEBI:78442"/>
        <dbReference type="ChEBI" id="CHEBI:78515"/>
        <dbReference type="ChEBI" id="CHEBI:456215"/>
        <dbReference type="EC" id="6.1.1.22"/>
    </reaction>
</comment>
<comment type="subunit">
    <text evidence="1">Homodimer.</text>
</comment>
<comment type="subcellular location">
    <subcellularLocation>
        <location evidence="1">Cytoplasm</location>
    </subcellularLocation>
</comment>
<comment type="similarity">
    <text evidence="1">Belongs to the class-II aminoacyl-tRNA synthetase family.</text>
</comment>
<gene>
    <name evidence="1" type="primary">asnS</name>
    <name type="ordered locus">BCI_0408</name>
</gene>
<sequence length="467" mass="53150">MIILPIAKILQGIILAADHEVIVQGWVRTRRDSKAGISFLSIYDGSCLDSLQVIINHDLPNYKSDVLHLTTGCSVVITGSIVTSIGVGQHFEIQAKNIKVLGWVKNPETYPITAKKHSLEFLREVAHLRPRTNIIGAVTRVRHTLAQAIHRFMHIEGFFWVSTPLITTFNCEGAGEMFRVSTLDLENLPYTSKGKINYEKDFFGKEAFLTVSGQLNGESYACALSKIYTFGPTFRAENSNTSRHLAEFWMVEPEVAFANLTDIAILAEKMLKYIFNAILIERVDDINFFAEQINKNIIKRLEQFISSNFAQIDYTEAIDILQNCKQKFDHTVFWGMDLFAEHERYLADKHFQAPVVVTNYPKDIKAFYMRINDDGKTVAAMDVLAPGIGEIIGGSQREERLAKLDQRLADRGLNIEDYWWYRDLRSYGTVPHSGFGLGLERLMIYITGMHNIRDVIPFPRNPRQASF</sequence>
<accession>Q1LT63</accession>
<protein>
    <recommendedName>
        <fullName evidence="1">Asparagine--tRNA ligase</fullName>
        <ecNumber evidence="1">6.1.1.22</ecNumber>
    </recommendedName>
    <alternativeName>
        <fullName evidence="1">Asparaginyl-tRNA synthetase</fullName>
        <shortName evidence="1">AsnRS</shortName>
    </alternativeName>
</protein>
<feature type="chain" id="PRO_1000051380" description="Asparagine--tRNA ligase">
    <location>
        <begin position="1"/>
        <end position="467"/>
    </location>
</feature>
<keyword id="KW-0030">Aminoacyl-tRNA synthetase</keyword>
<keyword id="KW-0067">ATP-binding</keyword>
<keyword id="KW-0963">Cytoplasm</keyword>
<keyword id="KW-0436">Ligase</keyword>
<keyword id="KW-0547">Nucleotide-binding</keyword>
<keyword id="KW-0648">Protein biosynthesis</keyword>
<keyword id="KW-1185">Reference proteome</keyword>
<proteinExistence type="inferred from homology"/>
<organism>
    <name type="scientific">Baumannia cicadellinicola subsp. Homalodisca coagulata</name>
    <dbReference type="NCBI Taxonomy" id="374463"/>
    <lineage>
        <taxon>Bacteria</taxon>
        <taxon>Pseudomonadati</taxon>
        <taxon>Pseudomonadota</taxon>
        <taxon>Gammaproteobacteria</taxon>
        <taxon>Candidatus Palibaumannia</taxon>
    </lineage>
</organism>
<name>SYN_BAUCH</name>
<reference key="1">
    <citation type="journal article" date="2006" name="PLoS Biol.">
        <title>Metabolic complementarity and genomics of the dual bacterial symbiosis of sharpshooters.</title>
        <authorList>
            <person name="Wu D."/>
            <person name="Daugherty S.C."/>
            <person name="Van Aken S.E."/>
            <person name="Pai G.H."/>
            <person name="Watkins K.L."/>
            <person name="Khouri H."/>
            <person name="Tallon L.J."/>
            <person name="Zaborsky J.M."/>
            <person name="Dunbar H.E."/>
            <person name="Tran P.L."/>
            <person name="Moran N.A."/>
            <person name="Eisen J.A."/>
        </authorList>
    </citation>
    <scope>NUCLEOTIDE SEQUENCE [LARGE SCALE GENOMIC DNA]</scope>
</reference>
<evidence type="ECO:0000255" key="1">
    <source>
        <dbReference type="HAMAP-Rule" id="MF_00534"/>
    </source>
</evidence>